<reference key="1">
    <citation type="submission" date="2008-02" db="EMBL/GenBank/DDBJ databases">
        <title>Complete sequence of Escherichia coli C str. ATCC 8739.</title>
        <authorList>
            <person name="Copeland A."/>
            <person name="Lucas S."/>
            <person name="Lapidus A."/>
            <person name="Glavina del Rio T."/>
            <person name="Dalin E."/>
            <person name="Tice H."/>
            <person name="Bruce D."/>
            <person name="Goodwin L."/>
            <person name="Pitluck S."/>
            <person name="Kiss H."/>
            <person name="Brettin T."/>
            <person name="Detter J.C."/>
            <person name="Han C."/>
            <person name="Kuske C.R."/>
            <person name="Schmutz J."/>
            <person name="Larimer F."/>
            <person name="Land M."/>
            <person name="Hauser L."/>
            <person name="Kyrpides N."/>
            <person name="Mikhailova N."/>
            <person name="Ingram L."/>
            <person name="Richardson P."/>
        </authorList>
    </citation>
    <scope>NUCLEOTIDE SEQUENCE [LARGE SCALE GENOMIC DNA]</scope>
    <source>
        <strain>ATCC 8739 / DSM 1576 / NBRC 3972 / NCIMB 8545 / WDCM 00012 / Crooks</strain>
    </source>
</reference>
<gene>
    <name evidence="1" type="primary">ybeY</name>
    <name type="ordered locus">EcolC_2986</name>
</gene>
<dbReference type="EC" id="3.1.-.-" evidence="1"/>
<dbReference type="EMBL" id="CP000946">
    <property type="protein sequence ID" value="ACA78611.1"/>
    <property type="molecule type" value="Genomic_DNA"/>
</dbReference>
<dbReference type="RefSeq" id="WP_000084469.1">
    <property type="nucleotide sequence ID" value="NZ_MTFT01000005.1"/>
</dbReference>
<dbReference type="SMR" id="B1IYE9"/>
<dbReference type="GeneID" id="93776823"/>
<dbReference type="KEGG" id="ecl:EcolC_2986"/>
<dbReference type="HOGENOM" id="CLU_106710_0_1_6"/>
<dbReference type="GO" id="GO:0005737">
    <property type="term" value="C:cytoplasm"/>
    <property type="evidence" value="ECO:0007669"/>
    <property type="project" value="UniProtKB-SubCell"/>
</dbReference>
<dbReference type="GO" id="GO:0004222">
    <property type="term" value="F:metalloendopeptidase activity"/>
    <property type="evidence" value="ECO:0007669"/>
    <property type="project" value="InterPro"/>
</dbReference>
<dbReference type="GO" id="GO:0004521">
    <property type="term" value="F:RNA endonuclease activity"/>
    <property type="evidence" value="ECO:0007669"/>
    <property type="project" value="UniProtKB-UniRule"/>
</dbReference>
<dbReference type="GO" id="GO:0008270">
    <property type="term" value="F:zinc ion binding"/>
    <property type="evidence" value="ECO:0007669"/>
    <property type="project" value="UniProtKB-UniRule"/>
</dbReference>
<dbReference type="GO" id="GO:0006364">
    <property type="term" value="P:rRNA processing"/>
    <property type="evidence" value="ECO:0007669"/>
    <property type="project" value="UniProtKB-UniRule"/>
</dbReference>
<dbReference type="FunFam" id="3.40.390.30:FF:000001">
    <property type="entry name" value="Endoribonuclease YbeY"/>
    <property type="match status" value="1"/>
</dbReference>
<dbReference type="Gene3D" id="3.40.390.30">
    <property type="entry name" value="Metalloproteases ('zincins'), catalytic domain"/>
    <property type="match status" value="1"/>
</dbReference>
<dbReference type="HAMAP" id="MF_00009">
    <property type="entry name" value="Endoribonucl_YbeY"/>
    <property type="match status" value="1"/>
</dbReference>
<dbReference type="InterPro" id="IPR023091">
    <property type="entry name" value="MetalPrtase_cat_dom_sf_prd"/>
</dbReference>
<dbReference type="InterPro" id="IPR002036">
    <property type="entry name" value="YbeY"/>
</dbReference>
<dbReference type="InterPro" id="IPR020549">
    <property type="entry name" value="YbeY_CS"/>
</dbReference>
<dbReference type="NCBIfam" id="TIGR00043">
    <property type="entry name" value="rRNA maturation RNase YbeY"/>
    <property type="match status" value="1"/>
</dbReference>
<dbReference type="PANTHER" id="PTHR46986">
    <property type="entry name" value="ENDORIBONUCLEASE YBEY, CHLOROPLASTIC"/>
    <property type="match status" value="1"/>
</dbReference>
<dbReference type="PANTHER" id="PTHR46986:SF1">
    <property type="entry name" value="ENDORIBONUCLEASE YBEY, CHLOROPLASTIC"/>
    <property type="match status" value="1"/>
</dbReference>
<dbReference type="Pfam" id="PF02130">
    <property type="entry name" value="YbeY"/>
    <property type="match status" value="1"/>
</dbReference>
<dbReference type="SUPFAM" id="SSF55486">
    <property type="entry name" value="Metalloproteases ('zincins'), catalytic domain"/>
    <property type="match status" value="1"/>
</dbReference>
<dbReference type="PROSITE" id="PS01306">
    <property type="entry name" value="UPF0054"/>
    <property type="match status" value="1"/>
</dbReference>
<organism>
    <name type="scientific">Escherichia coli (strain ATCC 8739 / DSM 1576 / NBRC 3972 / NCIMB 8545 / WDCM 00012 / Crooks)</name>
    <dbReference type="NCBI Taxonomy" id="481805"/>
    <lineage>
        <taxon>Bacteria</taxon>
        <taxon>Pseudomonadati</taxon>
        <taxon>Pseudomonadota</taxon>
        <taxon>Gammaproteobacteria</taxon>
        <taxon>Enterobacterales</taxon>
        <taxon>Enterobacteriaceae</taxon>
        <taxon>Escherichia</taxon>
    </lineage>
</organism>
<protein>
    <recommendedName>
        <fullName evidence="1">Endoribonuclease YbeY</fullName>
        <ecNumber evidence="1">3.1.-.-</ecNumber>
    </recommendedName>
</protein>
<feature type="chain" id="PRO_1000073904" description="Endoribonuclease YbeY">
    <location>
        <begin position="1"/>
        <end position="155"/>
    </location>
</feature>
<feature type="binding site" evidence="1">
    <location>
        <position position="114"/>
    </location>
    <ligand>
        <name>Zn(2+)</name>
        <dbReference type="ChEBI" id="CHEBI:29105"/>
        <note>catalytic</note>
    </ligand>
</feature>
<feature type="binding site" evidence="1">
    <location>
        <position position="118"/>
    </location>
    <ligand>
        <name>Zn(2+)</name>
        <dbReference type="ChEBI" id="CHEBI:29105"/>
        <note>catalytic</note>
    </ligand>
</feature>
<feature type="binding site" evidence="1">
    <location>
        <position position="124"/>
    </location>
    <ligand>
        <name>Zn(2+)</name>
        <dbReference type="ChEBI" id="CHEBI:29105"/>
        <note>catalytic</note>
    </ligand>
</feature>
<sequence>MSQVILDLQLACEDNSGLPEESQFQTWLNAVIPQFQEESEVTIRVVDTAESHSLNLTYRGKDKPTNVLSFPFEVPPGMEMSLLGDLVICRQVVEKEAQEQGKPLEAHWAHMVVHGSLHLLGYDHIEDDEAEEMEALETEIMLALGYEDPYIAEKE</sequence>
<keyword id="KW-0963">Cytoplasm</keyword>
<keyword id="KW-0255">Endonuclease</keyword>
<keyword id="KW-0378">Hydrolase</keyword>
<keyword id="KW-0479">Metal-binding</keyword>
<keyword id="KW-0540">Nuclease</keyword>
<keyword id="KW-0690">Ribosome biogenesis</keyword>
<keyword id="KW-0698">rRNA processing</keyword>
<keyword id="KW-0862">Zinc</keyword>
<accession>B1IYE9</accession>
<evidence type="ECO:0000255" key="1">
    <source>
        <dbReference type="HAMAP-Rule" id="MF_00009"/>
    </source>
</evidence>
<proteinExistence type="inferred from homology"/>
<name>YBEY_ECOLC</name>
<comment type="function">
    <text evidence="1">Single strand-specific metallo-endoribonuclease involved in late-stage 70S ribosome quality control and in maturation of the 3' terminus of the 16S rRNA.</text>
</comment>
<comment type="cofactor">
    <cofactor evidence="1">
        <name>Zn(2+)</name>
        <dbReference type="ChEBI" id="CHEBI:29105"/>
    </cofactor>
    <text evidence="1">Binds 1 zinc ion.</text>
</comment>
<comment type="subcellular location">
    <subcellularLocation>
        <location evidence="1">Cytoplasm</location>
    </subcellularLocation>
</comment>
<comment type="similarity">
    <text evidence="1">Belongs to the endoribonuclease YbeY family.</text>
</comment>